<comment type="function">
    <text evidence="1">Component of the sulfite reductase complex that catalyzes the 6-electron reduction of sulfite to sulfide. This is one of several activities required for the biosynthesis of L-cysteine from sulfate. The flavoprotein component catalyzes the electron flow from NADPH -&gt; FAD -&gt; FMN to the hemoprotein component.</text>
</comment>
<comment type="catalytic activity">
    <reaction evidence="1">
        <text>hydrogen sulfide + 3 NADP(+) + 3 H2O = sulfite + 3 NADPH + 4 H(+)</text>
        <dbReference type="Rhea" id="RHEA:13801"/>
        <dbReference type="ChEBI" id="CHEBI:15377"/>
        <dbReference type="ChEBI" id="CHEBI:15378"/>
        <dbReference type="ChEBI" id="CHEBI:17359"/>
        <dbReference type="ChEBI" id="CHEBI:29919"/>
        <dbReference type="ChEBI" id="CHEBI:57783"/>
        <dbReference type="ChEBI" id="CHEBI:58349"/>
        <dbReference type="EC" id="1.8.1.2"/>
    </reaction>
</comment>
<comment type="cofactor">
    <cofactor evidence="1">
        <name>FAD</name>
        <dbReference type="ChEBI" id="CHEBI:57692"/>
    </cofactor>
    <text evidence="1">Binds 1 FAD per subunit.</text>
</comment>
<comment type="cofactor">
    <cofactor evidence="1">
        <name>FMN</name>
        <dbReference type="ChEBI" id="CHEBI:58210"/>
    </cofactor>
    <text evidence="1">Binds 1 FMN per subunit.</text>
</comment>
<comment type="pathway">
    <text evidence="1">Sulfur metabolism; hydrogen sulfide biosynthesis; hydrogen sulfide from sulfite (NADPH route): step 1/1.</text>
</comment>
<comment type="subunit">
    <text evidence="1">Alpha(8)-beta(8). The alpha component is a flavoprotein, the beta component is a hemoprotein.</text>
</comment>
<comment type="similarity">
    <text evidence="1">Belongs to the NADPH-dependent sulphite reductase flavoprotein subunit CysJ family.</text>
</comment>
<comment type="similarity">
    <text evidence="1">In the N-terminal section; belongs to the flavodoxin family.</text>
</comment>
<comment type="similarity">
    <text evidence="1">In the C-terminal section; belongs to the flavoprotein pyridine nucleotide cytochrome reductase family.</text>
</comment>
<accession>Q9JUD8</accession>
<accession>A1IRY8</accession>
<dbReference type="EC" id="1.8.1.2" evidence="1"/>
<dbReference type="EMBL" id="AL157959">
    <property type="protein sequence ID" value="CAM08536.1"/>
    <property type="molecule type" value="Genomic_DNA"/>
</dbReference>
<dbReference type="PIR" id="E81905">
    <property type="entry name" value="E81905"/>
</dbReference>
<dbReference type="RefSeq" id="WP_002246197.1">
    <property type="nucleotide sequence ID" value="NC_003116.1"/>
</dbReference>
<dbReference type="SMR" id="Q9JUD8"/>
<dbReference type="EnsemblBacteria" id="CAM08536">
    <property type="protein sequence ID" value="CAM08536"/>
    <property type="gene ID" value="NMA1363"/>
</dbReference>
<dbReference type="KEGG" id="nma:NMA1363"/>
<dbReference type="HOGENOM" id="CLU_001570_17_7_4"/>
<dbReference type="UniPathway" id="UPA00140">
    <property type="reaction ID" value="UER00207"/>
</dbReference>
<dbReference type="Proteomes" id="UP000000626">
    <property type="component" value="Chromosome"/>
</dbReference>
<dbReference type="GO" id="GO:0005829">
    <property type="term" value="C:cytosol"/>
    <property type="evidence" value="ECO:0007669"/>
    <property type="project" value="TreeGrafter"/>
</dbReference>
<dbReference type="GO" id="GO:0050660">
    <property type="term" value="F:flavin adenine dinucleotide binding"/>
    <property type="evidence" value="ECO:0007669"/>
    <property type="project" value="InterPro"/>
</dbReference>
<dbReference type="GO" id="GO:0010181">
    <property type="term" value="F:FMN binding"/>
    <property type="evidence" value="ECO:0007669"/>
    <property type="project" value="InterPro"/>
</dbReference>
<dbReference type="GO" id="GO:0004783">
    <property type="term" value="F:sulfite reductase (NADPH) activity"/>
    <property type="evidence" value="ECO:0007669"/>
    <property type="project" value="UniProtKB-UniRule"/>
</dbReference>
<dbReference type="GO" id="GO:0019344">
    <property type="term" value="P:cysteine biosynthetic process"/>
    <property type="evidence" value="ECO:0007669"/>
    <property type="project" value="UniProtKB-KW"/>
</dbReference>
<dbReference type="GO" id="GO:0070814">
    <property type="term" value="P:hydrogen sulfide biosynthetic process"/>
    <property type="evidence" value="ECO:0007669"/>
    <property type="project" value="UniProtKB-UniRule"/>
</dbReference>
<dbReference type="GO" id="GO:0000103">
    <property type="term" value="P:sulfate assimilation"/>
    <property type="evidence" value="ECO:0007669"/>
    <property type="project" value="UniProtKB-UniRule"/>
</dbReference>
<dbReference type="CDD" id="cd06199">
    <property type="entry name" value="SiR"/>
    <property type="match status" value="1"/>
</dbReference>
<dbReference type="FunFam" id="3.40.50.80:FF:000001">
    <property type="entry name" value="NADPH--cytochrome P450 reductase 1"/>
    <property type="match status" value="1"/>
</dbReference>
<dbReference type="FunFam" id="3.40.50.360:FF:000018">
    <property type="entry name" value="Sulfite reductase [NADPH] flavoprotein alpha-component"/>
    <property type="match status" value="1"/>
</dbReference>
<dbReference type="Gene3D" id="3.40.50.360">
    <property type="match status" value="1"/>
</dbReference>
<dbReference type="Gene3D" id="1.20.990.10">
    <property type="entry name" value="NADPH-cytochrome p450 Reductase, Chain A, domain 3"/>
    <property type="match status" value="1"/>
</dbReference>
<dbReference type="Gene3D" id="3.40.50.80">
    <property type="entry name" value="Nucleotide-binding domain of ferredoxin-NADP reductase (FNR) module"/>
    <property type="match status" value="1"/>
</dbReference>
<dbReference type="Gene3D" id="2.40.30.10">
    <property type="entry name" value="Translation factors"/>
    <property type="match status" value="1"/>
</dbReference>
<dbReference type="HAMAP" id="MF_01541">
    <property type="entry name" value="CysJ"/>
    <property type="match status" value="1"/>
</dbReference>
<dbReference type="InterPro" id="IPR010199">
    <property type="entry name" value="CysJ"/>
</dbReference>
<dbReference type="InterPro" id="IPR003097">
    <property type="entry name" value="CysJ-like_FAD-binding"/>
</dbReference>
<dbReference type="InterPro" id="IPR029758">
    <property type="entry name" value="CysJ_Proteobact"/>
</dbReference>
<dbReference type="InterPro" id="IPR017927">
    <property type="entry name" value="FAD-bd_FR_type"/>
</dbReference>
<dbReference type="InterPro" id="IPR001094">
    <property type="entry name" value="Flavdoxin-like"/>
</dbReference>
<dbReference type="InterPro" id="IPR008254">
    <property type="entry name" value="Flavodoxin/NO_synth"/>
</dbReference>
<dbReference type="InterPro" id="IPR001709">
    <property type="entry name" value="Flavoprot_Pyr_Nucl_cyt_Rdtase"/>
</dbReference>
<dbReference type="InterPro" id="IPR029039">
    <property type="entry name" value="Flavoprotein-like_sf"/>
</dbReference>
<dbReference type="InterPro" id="IPR039261">
    <property type="entry name" value="FNR_nucleotide-bd"/>
</dbReference>
<dbReference type="InterPro" id="IPR023173">
    <property type="entry name" value="NADPH_Cyt_P450_Rdtase_alpha"/>
</dbReference>
<dbReference type="InterPro" id="IPR001433">
    <property type="entry name" value="OxRdtase_FAD/NAD-bd"/>
</dbReference>
<dbReference type="InterPro" id="IPR017938">
    <property type="entry name" value="Riboflavin_synthase-like_b-brl"/>
</dbReference>
<dbReference type="NCBIfam" id="TIGR01931">
    <property type="entry name" value="cysJ"/>
    <property type="match status" value="1"/>
</dbReference>
<dbReference type="PANTHER" id="PTHR19384:SF128">
    <property type="entry name" value="NADPH OXIDOREDUCTASE A"/>
    <property type="match status" value="1"/>
</dbReference>
<dbReference type="PANTHER" id="PTHR19384">
    <property type="entry name" value="NITRIC OXIDE SYNTHASE-RELATED"/>
    <property type="match status" value="1"/>
</dbReference>
<dbReference type="Pfam" id="PF00667">
    <property type="entry name" value="FAD_binding_1"/>
    <property type="match status" value="1"/>
</dbReference>
<dbReference type="Pfam" id="PF00258">
    <property type="entry name" value="Flavodoxin_1"/>
    <property type="match status" value="1"/>
</dbReference>
<dbReference type="Pfam" id="PF00175">
    <property type="entry name" value="NAD_binding_1"/>
    <property type="match status" value="1"/>
</dbReference>
<dbReference type="PIRSF" id="PIRSF000207">
    <property type="entry name" value="SiR-FP_CysJ"/>
    <property type="match status" value="1"/>
</dbReference>
<dbReference type="PRINTS" id="PR00369">
    <property type="entry name" value="FLAVODOXIN"/>
</dbReference>
<dbReference type="PRINTS" id="PR00371">
    <property type="entry name" value="FPNCR"/>
</dbReference>
<dbReference type="SUPFAM" id="SSF52343">
    <property type="entry name" value="Ferredoxin reductase-like, C-terminal NADP-linked domain"/>
    <property type="match status" value="1"/>
</dbReference>
<dbReference type="SUPFAM" id="SSF52218">
    <property type="entry name" value="Flavoproteins"/>
    <property type="match status" value="1"/>
</dbReference>
<dbReference type="SUPFAM" id="SSF63380">
    <property type="entry name" value="Riboflavin synthase domain-like"/>
    <property type="match status" value="1"/>
</dbReference>
<dbReference type="PROSITE" id="PS51384">
    <property type="entry name" value="FAD_FR"/>
    <property type="match status" value="1"/>
</dbReference>
<dbReference type="PROSITE" id="PS50902">
    <property type="entry name" value="FLAVODOXIN_LIKE"/>
    <property type="match status" value="1"/>
</dbReference>
<keyword id="KW-0028">Amino-acid biosynthesis</keyword>
<keyword id="KW-0198">Cysteine biosynthesis</keyword>
<keyword id="KW-0249">Electron transport</keyword>
<keyword id="KW-0274">FAD</keyword>
<keyword id="KW-0285">Flavoprotein</keyword>
<keyword id="KW-0288">FMN</keyword>
<keyword id="KW-0521">NADP</keyword>
<keyword id="KW-0560">Oxidoreductase</keyword>
<keyword id="KW-0813">Transport</keyword>
<sequence>MSEHDMQNTNPPLPPMPPEITQLLSGLDAAQWAWLSGYAWAKAGNGASAGLPALQTALPTAEPFSVTVLSASQTGNAKSVADKAADSLEAAGIQVSRAELKDYKAKNIAGERRLLLVTSTQGEGEPPEEAVVLHKLLNGKKAPKLDKLQFAVLGLGDSSYPNFCRAGKDFDKRFEELGAKRLLERVDADLDFAAAADGWTDNIAALLKEEAAKNRATPAPQTTPPAGLQTAPDGRYCKADPFPAALLANQKITARQSDKDVRHIEIDLSGSDLHYLPGDALGVWFDNDPALVREILDLLGIDQATEIQAGGKTLPVASALLSHFELTQNTPAFVKGYAPFADDDELDRIAADNAVLQGFVQSTPIADVLHRFPAKLTAEQFAGLLRPLAPRLYSISSSQAEVGDEVHLTVGAVRFEHEGRARAGGASGFLADRLEEDGTVRVFVERNDGFRLPEDSRKPIVMIGSGTGVAPFRAFVQQRAAENAEGKNWLFFGNPHFARDFLYQTEWQQFAKDGFLHRYDFAWSRDQEEKIYVQDKIREQAEGLWQWLQEGAHIYVCGDAAKMAKDVEAALLDVIIGAGHLDEEGAEEYLDMLREEKRYQRDVY</sequence>
<gene>
    <name evidence="1" type="primary">cysJ</name>
    <name type="ordered locus">NMA1363</name>
</gene>
<organism>
    <name type="scientific">Neisseria meningitidis serogroup A / serotype 4A (strain DSM 15465 / Z2491)</name>
    <dbReference type="NCBI Taxonomy" id="122587"/>
    <lineage>
        <taxon>Bacteria</taxon>
        <taxon>Pseudomonadati</taxon>
        <taxon>Pseudomonadota</taxon>
        <taxon>Betaproteobacteria</taxon>
        <taxon>Neisseriales</taxon>
        <taxon>Neisseriaceae</taxon>
        <taxon>Neisseria</taxon>
    </lineage>
</organism>
<proteinExistence type="inferred from homology"/>
<protein>
    <recommendedName>
        <fullName evidence="1">Sulfite reductase [NADPH] flavoprotein alpha-component</fullName>
        <shortName evidence="1">SiR-FP</shortName>
        <ecNumber evidence="1">1.8.1.2</ecNumber>
    </recommendedName>
</protein>
<feature type="chain" id="PRO_0000199928" description="Sulfite reductase [NADPH] flavoprotein alpha-component">
    <location>
        <begin position="1"/>
        <end position="604"/>
    </location>
</feature>
<feature type="domain" description="Flavodoxin-like" evidence="1">
    <location>
        <begin position="66"/>
        <end position="204"/>
    </location>
</feature>
<feature type="domain" description="FAD-binding FR-type" evidence="1">
    <location>
        <begin position="239"/>
        <end position="453"/>
    </location>
</feature>
<feature type="binding site" evidence="1">
    <location>
        <begin position="72"/>
        <end position="77"/>
    </location>
    <ligand>
        <name>FMN</name>
        <dbReference type="ChEBI" id="CHEBI:58210"/>
    </ligand>
</feature>
<feature type="binding site" evidence="1">
    <location>
        <begin position="119"/>
        <end position="122"/>
    </location>
    <ligand>
        <name>FMN</name>
        <dbReference type="ChEBI" id="CHEBI:58210"/>
    </ligand>
</feature>
<feature type="binding site" evidence="1">
    <location>
        <begin position="155"/>
        <end position="164"/>
    </location>
    <ligand>
        <name>FMN</name>
        <dbReference type="ChEBI" id="CHEBI:58210"/>
    </ligand>
</feature>
<feature type="binding site" evidence="1">
    <location>
        <position position="327"/>
    </location>
    <ligand>
        <name>FAD</name>
        <dbReference type="ChEBI" id="CHEBI:57692"/>
    </ligand>
</feature>
<feature type="binding site" evidence="1">
    <location>
        <position position="361"/>
    </location>
    <ligand>
        <name>FAD</name>
        <dbReference type="ChEBI" id="CHEBI:57692"/>
    </ligand>
</feature>
<feature type="binding site" evidence="1">
    <location>
        <begin position="391"/>
        <end position="394"/>
    </location>
    <ligand>
        <name>FAD</name>
        <dbReference type="ChEBI" id="CHEBI:57692"/>
    </ligand>
</feature>
<feature type="binding site" evidence="1">
    <location>
        <begin position="409"/>
        <end position="411"/>
    </location>
    <ligand>
        <name>FAD</name>
        <dbReference type="ChEBI" id="CHEBI:57692"/>
    </ligand>
</feature>
<feature type="binding site" evidence="1">
    <location>
        <begin position="424"/>
        <end position="427"/>
    </location>
    <ligand>
        <name>FAD</name>
        <dbReference type="ChEBI" id="CHEBI:57692"/>
    </ligand>
</feature>
<feature type="binding site" evidence="1">
    <location>
        <begin position="524"/>
        <end position="525"/>
    </location>
    <ligand>
        <name>NADP(+)</name>
        <dbReference type="ChEBI" id="CHEBI:58349"/>
    </ligand>
</feature>
<feature type="binding site" evidence="1">
    <location>
        <begin position="530"/>
        <end position="534"/>
    </location>
    <ligand>
        <name>NADP(+)</name>
        <dbReference type="ChEBI" id="CHEBI:58349"/>
    </ligand>
</feature>
<feature type="binding site" evidence="1">
    <location>
        <position position="566"/>
    </location>
    <ligand>
        <name>NADP(+)</name>
        <dbReference type="ChEBI" id="CHEBI:58349"/>
    </ligand>
</feature>
<feature type="binding site" evidence="1">
    <location>
        <position position="604"/>
    </location>
    <ligand>
        <name>FAD</name>
        <dbReference type="ChEBI" id="CHEBI:57692"/>
    </ligand>
</feature>
<evidence type="ECO:0000255" key="1">
    <source>
        <dbReference type="HAMAP-Rule" id="MF_01541"/>
    </source>
</evidence>
<reference key="1">
    <citation type="journal article" date="2000" name="Nature">
        <title>Complete DNA sequence of a serogroup A strain of Neisseria meningitidis Z2491.</title>
        <authorList>
            <person name="Parkhill J."/>
            <person name="Achtman M."/>
            <person name="James K.D."/>
            <person name="Bentley S.D."/>
            <person name="Churcher C.M."/>
            <person name="Klee S.R."/>
            <person name="Morelli G."/>
            <person name="Basham D."/>
            <person name="Brown D."/>
            <person name="Chillingworth T."/>
            <person name="Davies R.M."/>
            <person name="Davis P."/>
            <person name="Devlin K."/>
            <person name="Feltwell T."/>
            <person name="Hamlin N."/>
            <person name="Holroyd S."/>
            <person name="Jagels K."/>
            <person name="Leather S."/>
            <person name="Moule S."/>
            <person name="Mungall K.L."/>
            <person name="Quail M.A."/>
            <person name="Rajandream M.A."/>
            <person name="Rutherford K.M."/>
            <person name="Simmonds M."/>
            <person name="Skelton J."/>
            <person name="Whitehead S."/>
            <person name="Spratt B.G."/>
            <person name="Barrell B.G."/>
        </authorList>
    </citation>
    <scope>NUCLEOTIDE SEQUENCE [LARGE SCALE GENOMIC DNA]</scope>
    <source>
        <strain>DSM 15465 / Z2491</strain>
    </source>
</reference>
<name>CYSJ_NEIMA</name>